<reference key="1">
    <citation type="journal article" date="2011" name="Nat. Commun.">
        <title>Effector diversification within compartments of the Leptosphaeria maculans genome affected by Repeat-Induced Point mutations.</title>
        <authorList>
            <person name="Rouxel T."/>
            <person name="Grandaubert J."/>
            <person name="Hane J.K."/>
            <person name="Hoede C."/>
            <person name="van de Wouw A.P."/>
            <person name="Couloux A."/>
            <person name="Dominguez V."/>
            <person name="Anthouard V."/>
            <person name="Bally P."/>
            <person name="Bourras S."/>
            <person name="Cozijnsen A.J."/>
            <person name="Ciuffetti L.M."/>
            <person name="Degrave A."/>
            <person name="Dilmaghani A."/>
            <person name="Duret L."/>
            <person name="Fudal I."/>
            <person name="Goodwin S.B."/>
            <person name="Gout L."/>
            <person name="Glaser N."/>
            <person name="Linglin J."/>
            <person name="Kema G.H.J."/>
            <person name="Lapalu N."/>
            <person name="Lawrence C.B."/>
            <person name="May K."/>
            <person name="Meyer M."/>
            <person name="Ollivier B."/>
            <person name="Poulain J."/>
            <person name="Schoch C.L."/>
            <person name="Simon A."/>
            <person name="Spatafora J.W."/>
            <person name="Stachowiak A."/>
            <person name="Turgeon B.G."/>
            <person name="Tyler B.M."/>
            <person name="Vincent D."/>
            <person name="Weissenbach J."/>
            <person name="Amselem J."/>
            <person name="Quesneville H."/>
            <person name="Oliver R.P."/>
            <person name="Wincker P."/>
            <person name="Balesdent M.-H."/>
            <person name="Howlett B.J."/>
        </authorList>
    </citation>
    <scope>NUCLEOTIDE SEQUENCE [LARGE SCALE GENOMIC DNA]</scope>
    <source>
        <strain>JN3 / isolate v23.1.3 / race Av1-4-5-6-7-8</strain>
    </source>
</reference>
<name>KEX1_LEPMJ</name>
<evidence type="ECO:0000250" key="1"/>
<evidence type="ECO:0000255" key="2"/>
<evidence type="ECO:0000255" key="3">
    <source>
        <dbReference type="PROSITE-ProRule" id="PRU10074"/>
    </source>
</evidence>
<evidence type="ECO:0000256" key="4">
    <source>
        <dbReference type="SAM" id="MobiDB-lite"/>
    </source>
</evidence>
<evidence type="ECO:0000305" key="5"/>
<comment type="function">
    <text evidence="1">Protease with a carboxypeptidase B-like function involved in the C-terminal processing of the lysine and arginine residues from protein precursors. Promotes cell fusion and is involved in the programmed cell death (By similarity).</text>
</comment>
<comment type="catalytic activity">
    <reaction>
        <text>Preferential release of a C-terminal arginine or lysine residue.</text>
        <dbReference type="EC" id="3.4.16.6"/>
    </reaction>
</comment>
<comment type="subcellular location">
    <subcellularLocation>
        <location evidence="1">Golgi apparatus</location>
        <location evidence="1">trans-Golgi network membrane</location>
        <topology evidence="1">Single-pass type I membrane protein</topology>
    </subcellularLocation>
</comment>
<comment type="similarity">
    <text evidence="5">Belongs to the peptidase S10 family.</text>
</comment>
<dbReference type="EC" id="3.4.16.6"/>
<dbReference type="EMBL" id="FP929083">
    <property type="protein sequence ID" value="CBX92010.1"/>
    <property type="molecule type" value="Genomic_DNA"/>
</dbReference>
<dbReference type="RefSeq" id="XP_003835375.1">
    <property type="nucleotide sequence ID" value="XM_003835327.1"/>
</dbReference>
<dbReference type="SMR" id="E5R540"/>
<dbReference type="FunCoup" id="E5R540">
    <property type="interactions" value="102"/>
</dbReference>
<dbReference type="STRING" id="985895.E5R540"/>
<dbReference type="ESTHER" id="lepmj-kex1">
    <property type="family name" value="Carboxypeptidase_S10"/>
</dbReference>
<dbReference type="MEROPS" id="S10.007"/>
<dbReference type="GlyCosmos" id="E5R540">
    <property type="glycosylation" value="4 sites, No reported glycans"/>
</dbReference>
<dbReference type="EnsemblFungi" id="CBX92010">
    <property type="protein sequence ID" value="CBX92010"/>
    <property type="gene ID" value="LEMA_P047160.1"/>
</dbReference>
<dbReference type="GeneID" id="13284615"/>
<dbReference type="VEuPathDB" id="FungiDB:LEMA_P047160.1"/>
<dbReference type="eggNOG" id="KOG1282">
    <property type="taxonomic scope" value="Eukaryota"/>
</dbReference>
<dbReference type="HOGENOM" id="CLU_008523_11_0_1"/>
<dbReference type="InParanoid" id="E5R540"/>
<dbReference type="OMA" id="EMADQFV"/>
<dbReference type="OrthoDB" id="443318at2759"/>
<dbReference type="Proteomes" id="UP000002668">
    <property type="component" value="Genome"/>
</dbReference>
<dbReference type="GO" id="GO:0016020">
    <property type="term" value="C:membrane"/>
    <property type="evidence" value="ECO:0007669"/>
    <property type="project" value="UniProtKB-KW"/>
</dbReference>
<dbReference type="GO" id="GO:0005802">
    <property type="term" value="C:trans-Golgi network"/>
    <property type="evidence" value="ECO:0007669"/>
    <property type="project" value="TreeGrafter"/>
</dbReference>
<dbReference type="GO" id="GO:0004185">
    <property type="term" value="F:serine-type carboxypeptidase activity"/>
    <property type="evidence" value="ECO:0007669"/>
    <property type="project" value="UniProtKB-EC"/>
</dbReference>
<dbReference type="GO" id="GO:0006915">
    <property type="term" value="P:apoptotic process"/>
    <property type="evidence" value="ECO:0007669"/>
    <property type="project" value="UniProtKB-KW"/>
</dbReference>
<dbReference type="GO" id="GO:0006508">
    <property type="term" value="P:proteolysis"/>
    <property type="evidence" value="ECO:0007669"/>
    <property type="project" value="UniProtKB-KW"/>
</dbReference>
<dbReference type="FunFam" id="3.40.50.1820:FF:000121">
    <property type="entry name" value="Carboxypeptidase D"/>
    <property type="match status" value="1"/>
</dbReference>
<dbReference type="Gene3D" id="3.40.50.1820">
    <property type="entry name" value="alpha/beta hydrolase"/>
    <property type="match status" value="1"/>
</dbReference>
<dbReference type="InterPro" id="IPR029058">
    <property type="entry name" value="AB_hydrolase_fold"/>
</dbReference>
<dbReference type="InterPro" id="IPR001563">
    <property type="entry name" value="Peptidase_S10"/>
</dbReference>
<dbReference type="InterPro" id="IPR018202">
    <property type="entry name" value="Ser_caboxypep_ser_AS"/>
</dbReference>
<dbReference type="PANTHER" id="PTHR11802:SF190">
    <property type="entry name" value="PHEROMONE-PROCESSING CARBOXYPEPTIDASE KEX1"/>
    <property type="match status" value="1"/>
</dbReference>
<dbReference type="PANTHER" id="PTHR11802">
    <property type="entry name" value="SERINE PROTEASE FAMILY S10 SERINE CARBOXYPEPTIDASE"/>
    <property type="match status" value="1"/>
</dbReference>
<dbReference type="Pfam" id="PF00450">
    <property type="entry name" value="Peptidase_S10"/>
    <property type="match status" value="1"/>
</dbReference>
<dbReference type="PRINTS" id="PR00724">
    <property type="entry name" value="CRBOXYPTASEC"/>
</dbReference>
<dbReference type="SUPFAM" id="SSF53474">
    <property type="entry name" value="alpha/beta-Hydrolases"/>
    <property type="match status" value="1"/>
</dbReference>
<dbReference type="PROSITE" id="PS00131">
    <property type="entry name" value="CARBOXYPEPT_SER_SER"/>
    <property type="match status" value="1"/>
</dbReference>
<sequence>MASTYSTPRWRTALLGGFLTTLPWLSSGMAGKTQADYFIKSLPGAPEPLLKMHAGHIEVDAEHNGNLFFWHYENRHIADRQRTVLWLNGGPGCSSMDGALMEVGPYRVQADGNLHYNNGSWDEFANLLFVDQPVGTGFSYVNTDSYLTELDQMANHMVIFLEKWFGLFPEYEHDDLYIAGESYAGQHIPYIARAIVKRNKEQGKTPWALKGLLIGNGWISPVDQYLSYIPYAYQNGLMKADSDMAKRVENQQRICIKKLEDGGMDAVDTNDCEQIMVNILEETKDRKADRMNQCVNMYDIRLRDDASCGMNWPPDLASVTPYLRRPDVIQALHINPDKKTGWQECNGAVSGHFRAKKSEPSVRFLPELIPEVPTLLFSGDKDFICNHIGTEEMIKNMQWSGGKGFEVTPGVWAPKQDWTFEGEAAGSWQEARNLTYVVFYNSSHMVPFDYPRRTRDMLDRFMGVDIEQIGGVPSDSRIDGEKGPLTSVGDHPNSTRAEEDKATDVKQAEWKAYYRSGQVALVVVVIVAALWGIFLWRSRRRHTKTAYQGDDGDEGRESLLTGMGLDNFRRKERRSDLEAADFDERELDDLDGASKKPGNGYASLGSEKERQSHNDSTFSLGGDSDDEAGSSDGPKRKGGSS</sequence>
<feature type="signal peptide" evidence="2">
    <location>
        <begin position="1"/>
        <end position="35"/>
    </location>
</feature>
<feature type="chain" id="PRO_0000411923" description="Pheromone-processing carboxypeptidase KEX1">
    <location>
        <begin position="36"/>
        <end position="641"/>
    </location>
</feature>
<feature type="topological domain" description="Lumenal" evidence="2">
    <location>
        <begin position="36"/>
        <end position="515"/>
    </location>
</feature>
<feature type="transmembrane region" description="Helical" evidence="2">
    <location>
        <begin position="516"/>
        <end position="536"/>
    </location>
</feature>
<feature type="topological domain" description="Cytoplasmic" evidence="2">
    <location>
        <begin position="537"/>
        <end position="641"/>
    </location>
</feature>
<feature type="region of interest" description="Disordered" evidence="4">
    <location>
        <begin position="472"/>
        <end position="502"/>
    </location>
</feature>
<feature type="region of interest" description="Disordered" evidence="4">
    <location>
        <begin position="585"/>
        <end position="641"/>
    </location>
</feature>
<feature type="active site" evidence="3">
    <location>
        <position position="182"/>
    </location>
</feature>
<feature type="active site" evidence="3">
    <location>
        <position position="382"/>
    </location>
</feature>
<feature type="active site" evidence="3">
    <location>
        <position position="444"/>
    </location>
</feature>
<feature type="glycosylation site" description="N-linked (GlcNAc...) asparagine" evidence="2">
    <location>
        <position position="118"/>
    </location>
</feature>
<feature type="glycosylation site" description="N-linked (GlcNAc...) asparagine" evidence="2">
    <location>
        <position position="433"/>
    </location>
</feature>
<feature type="glycosylation site" description="N-linked (GlcNAc...) asparagine" evidence="2">
    <location>
        <position position="441"/>
    </location>
</feature>
<feature type="glycosylation site" description="N-linked (GlcNAc...) asparagine" evidence="2">
    <location>
        <position position="493"/>
    </location>
</feature>
<accession>E5R540</accession>
<gene>
    <name type="primary">KEX1</name>
    <name type="ORF">Lema_P047160</name>
</gene>
<protein>
    <recommendedName>
        <fullName>Pheromone-processing carboxypeptidase KEX1</fullName>
        <ecNumber>3.4.16.6</ecNumber>
    </recommendedName>
    <alternativeName>
        <fullName>Carboxypeptidase D</fullName>
    </alternativeName>
</protein>
<keyword id="KW-0053">Apoptosis</keyword>
<keyword id="KW-0121">Carboxypeptidase</keyword>
<keyword id="KW-0325">Glycoprotein</keyword>
<keyword id="KW-0333">Golgi apparatus</keyword>
<keyword id="KW-0378">Hydrolase</keyword>
<keyword id="KW-0472">Membrane</keyword>
<keyword id="KW-0645">Protease</keyword>
<keyword id="KW-1185">Reference proteome</keyword>
<keyword id="KW-0732">Signal</keyword>
<keyword id="KW-0812">Transmembrane</keyword>
<keyword id="KW-1133">Transmembrane helix</keyword>
<proteinExistence type="inferred from homology"/>
<organism>
    <name type="scientific">Leptosphaeria maculans (strain JN3 / isolate v23.1.3 / race Av1-4-5-6-7-8)</name>
    <name type="common">Blackleg fungus</name>
    <name type="synonym">Phoma lingam</name>
    <dbReference type="NCBI Taxonomy" id="985895"/>
    <lineage>
        <taxon>Eukaryota</taxon>
        <taxon>Fungi</taxon>
        <taxon>Dikarya</taxon>
        <taxon>Ascomycota</taxon>
        <taxon>Pezizomycotina</taxon>
        <taxon>Dothideomycetes</taxon>
        <taxon>Pleosporomycetidae</taxon>
        <taxon>Pleosporales</taxon>
        <taxon>Pleosporineae</taxon>
        <taxon>Leptosphaeriaceae</taxon>
        <taxon>Plenodomus</taxon>
        <taxon>Plenodomus lingam/Leptosphaeria maculans species complex</taxon>
    </lineage>
</organism>